<evidence type="ECO:0000250" key="1">
    <source>
        <dbReference type="UniProtKB" id="O74213"/>
    </source>
</evidence>
<evidence type="ECO:0000255" key="2"/>
<evidence type="ECO:0000255" key="3">
    <source>
        <dbReference type="PROSITE-ProRule" id="PRU00498"/>
    </source>
</evidence>
<evidence type="ECO:0000255" key="4">
    <source>
        <dbReference type="PROSITE-ProRule" id="PRU10052"/>
    </source>
</evidence>
<evidence type="ECO:0000305" key="5"/>
<gene>
    <name type="primary">PGA3</name>
    <name type="ordered locus">At1g02790</name>
    <name type="ORF">F22D16.22</name>
    <name type="ORF">T14P4_2</name>
</gene>
<reference key="1">
    <citation type="journal article" date="1999" name="Mol. Gen. Genet.">
        <title>Differential expression of a polygalacturonase gene family in Arabidopsis thaliana.</title>
        <authorList>
            <person name="Torki M."/>
            <person name="Mandaron P."/>
            <person name="Thomas F."/>
            <person name="Quigley F."/>
            <person name="Mache R."/>
            <person name="Falconet D."/>
        </authorList>
    </citation>
    <scope>NUCLEOTIDE SEQUENCE [MRNA]</scope>
    <source>
        <strain>cv. C24</strain>
        <tissue>Flower bud</tissue>
    </source>
</reference>
<reference key="2">
    <citation type="submission" date="1998-01" db="EMBL/GenBank/DDBJ databases">
        <title>Organisation and expression of a family of polygalacturonase gene in Arabidopsis thaliana.</title>
        <authorList>
            <person name="Torki M."/>
            <person name="Thomas F."/>
            <person name="Mache R."/>
            <person name="Mandaron P."/>
            <person name="Falconet D."/>
        </authorList>
    </citation>
    <scope>NUCLEOTIDE SEQUENCE [GENOMIC DNA]</scope>
</reference>
<reference key="3">
    <citation type="journal article" date="2000" name="Nature">
        <title>Sequence and analysis of chromosome 1 of the plant Arabidopsis thaliana.</title>
        <authorList>
            <person name="Theologis A."/>
            <person name="Ecker J.R."/>
            <person name="Palm C.J."/>
            <person name="Federspiel N.A."/>
            <person name="Kaul S."/>
            <person name="White O."/>
            <person name="Alonso J."/>
            <person name="Altafi H."/>
            <person name="Araujo R."/>
            <person name="Bowman C.L."/>
            <person name="Brooks S.Y."/>
            <person name="Buehler E."/>
            <person name="Chan A."/>
            <person name="Chao Q."/>
            <person name="Chen H."/>
            <person name="Cheuk R.F."/>
            <person name="Chin C.W."/>
            <person name="Chung M.K."/>
            <person name="Conn L."/>
            <person name="Conway A.B."/>
            <person name="Conway A.R."/>
            <person name="Creasy T.H."/>
            <person name="Dewar K."/>
            <person name="Dunn P."/>
            <person name="Etgu P."/>
            <person name="Feldblyum T.V."/>
            <person name="Feng J.-D."/>
            <person name="Fong B."/>
            <person name="Fujii C.Y."/>
            <person name="Gill J.E."/>
            <person name="Goldsmith A.D."/>
            <person name="Haas B."/>
            <person name="Hansen N.F."/>
            <person name="Hughes B."/>
            <person name="Huizar L."/>
            <person name="Hunter J.L."/>
            <person name="Jenkins J."/>
            <person name="Johnson-Hopson C."/>
            <person name="Khan S."/>
            <person name="Khaykin E."/>
            <person name="Kim C.J."/>
            <person name="Koo H.L."/>
            <person name="Kremenetskaia I."/>
            <person name="Kurtz D.B."/>
            <person name="Kwan A."/>
            <person name="Lam B."/>
            <person name="Langin-Hooper S."/>
            <person name="Lee A."/>
            <person name="Lee J.M."/>
            <person name="Lenz C.A."/>
            <person name="Li J.H."/>
            <person name="Li Y.-P."/>
            <person name="Lin X."/>
            <person name="Liu S.X."/>
            <person name="Liu Z.A."/>
            <person name="Luros J.S."/>
            <person name="Maiti R."/>
            <person name="Marziali A."/>
            <person name="Militscher J."/>
            <person name="Miranda M."/>
            <person name="Nguyen M."/>
            <person name="Nierman W.C."/>
            <person name="Osborne B.I."/>
            <person name="Pai G."/>
            <person name="Peterson J."/>
            <person name="Pham P.K."/>
            <person name="Rizzo M."/>
            <person name="Rooney T."/>
            <person name="Rowley D."/>
            <person name="Sakano H."/>
            <person name="Salzberg S.L."/>
            <person name="Schwartz J.R."/>
            <person name="Shinn P."/>
            <person name="Southwick A.M."/>
            <person name="Sun H."/>
            <person name="Tallon L.J."/>
            <person name="Tambunga G."/>
            <person name="Toriumi M.J."/>
            <person name="Town C.D."/>
            <person name="Utterback T."/>
            <person name="Van Aken S."/>
            <person name="Vaysberg M."/>
            <person name="Vysotskaia V.S."/>
            <person name="Walker M."/>
            <person name="Wu D."/>
            <person name="Yu G."/>
            <person name="Fraser C.M."/>
            <person name="Venter J.C."/>
            <person name="Davis R.W."/>
        </authorList>
    </citation>
    <scope>NUCLEOTIDE SEQUENCE [LARGE SCALE GENOMIC DNA]</scope>
    <source>
        <strain>cv. Columbia</strain>
    </source>
</reference>
<reference key="4">
    <citation type="journal article" date="2017" name="Plant J.">
        <title>Araport11: a complete reannotation of the Arabidopsis thaliana reference genome.</title>
        <authorList>
            <person name="Cheng C.Y."/>
            <person name="Krishnakumar V."/>
            <person name="Chan A.P."/>
            <person name="Thibaud-Nissen F."/>
            <person name="Schobel S."/>
            <person name="Town C.D."/>
        </authorList>
    </citation>
    <scope>GENOME REANNOTATION</scope>
    <source>
        <strain>cv. Columbia</strain>
    </source>
</reference>
<reference key="5">
    <citation type="journal article" date="2003" name="Science">
        <title>Empirical analysis of transcriptional activity in the Arabidopsis genome.</title>
        <authorList>
            <person name="Yamada K."/>
            <person name="Lim J."/>
            <person name="Dale J.M."/>
            <person name="Chen H."/>
            <person name="Shinn P."/>
            <person name="Palm C.J."/>
            <person name="Southwick A.M."/>
            <person name="Wu H.C."/>
            <person name="Kim C.J."/>
            <person name="Nguyen M."/>
            <person name="Pham P.K."/>
            <person name="Cheuk R.F."/>
            <person name="Karlin-Newmann G."/>
            <person name="Liu S.X."/>
            <person name="Lam B."/>
            <person name="Sakano H."/>
            <person name="Wu T."/>
            <person name="Yu G."/>
            <person name="Miranda M."/>
            <person name="Quach H.L."/>
            <person name="Tripp M."/>
            <person name="Chang C.H."/>
            <person name="Lee J.M."/>
            <person name="Toriumi M.J."/>
            <person name="Chan M.M."/>
            <person name="Tang C.C."/>
            <person name="Onodera C.S."/>
            <person name="Deng J.M."/>
            <person name="Akiyama K."/>
            <person name="Ansari Y."/>
            <person name="Arakawa T."/>
            <person name="Banh J."/>
            <person name="Banno F."/>
            <person name="Bowser L."/>
            <person name="Brooks S.Y."/>
            <person name="Carninci P."/>
            <person name="Chao Q."/>
            <person name="Choy N."/>
            <person name="Enju A."/>
            <person name="Goldsmith A.D."/>
            <person name="Gurjal M."/>
            <person name="Hansen N.F."/>
            <person name="Hayashizaki Y."/>
            <person name="Johnson-Hopson C."/>
            <person name="Hsuan V.W."/>
            <person name="Iida K."/>
            <person name="Karnes M."/>
            <person name="Khan S."/>
            <person name="Koesema E."/>
            <person name="Ishida J."/>
            <person name="Jiang P.X."/>
            <person name="Jones T."/>
            <person name="Kawai J."/>
            <person name="Kamiya A."/>
            <person name="Meyers C."/>
            <person name="Nakajima M."/>
            <person name="Narusaka M."/>
            <person name="Seki M."/>
            <person name="Sakurai T."/>
            <person name="Satou M."/>
            <person name="Tamse R."/>
            <person name="Vaysberg M."/>
            <person name="Wallender E.K."/>
            <person name="Wong C."/>
            <person name="Yamamura Y."/>
            <person name="Yuan S."/>
            <person name="Shinozaki K."/>
            <person name="Davis R.W."/>
            <person name="Theologis A."/>
            <person name="Ecker J.R."/>
        </authorList>
    </citation>
    <scope>NUCLEOTIDE SEQUENCE [LARGE SCALE MRNA]</scope>
    <source>
        <strain>cv. Columbia</strain>
    </source>
</reference>
<proteinExistence type="evidence at transcript level"/>
<comment type="function">
    <text>May function in depolymerizing pectin during pollen development, germination, and tube growth. Acts as an exo-polygalacturonase.</text>
</comment>
<comment type="catalytic activity">
    <reaction>
        <text>[(1-&gt;4)-alpha-D-galacturonosyl](n) + H2O = alpha-D-galacturonate + [(1-&gt;4)-alpha-D-galacturonosyl](n-1)</text>
        <dbReference type="Rhea" id="RHEA:14117"/>
        <dbReference type="Rhea" id="RHEA-COMP:14570"/>
        <dbReference type="Rhea" id="RHEA-COMP:14572"/>
        <dbReference type="ChEBI" id="CHEBI:15377"/>
        <dbReference type="ChEBI" id="CHEBI:58658"/>
        <dbReference type="ChEBI" id="CHEBI:140523"/>
        <dbReference type="EC" id="3.2.1.67"/>
    </reaction>
</comment>
<comment type="subcellular location">
    <subcellularLocation>
        <location>Secreted</location>
    </subcellularLocation>
    <subcellularLocation>
        <location>Secreted</location>
        <location>Cell wall</location>
    </subcellularLocation>
</comment>
<comment type="similarity">
    <text evidence="5">Belongs to the glycosyl hydrolase 28 family.</text>
</comment>
<accession>P49062</accession>
<name>PGLR1_ARATH</name>
<keyword id="KW-0134">Cell wall</keyword>
<keyword id="KW-0961">Cell wall biogenesis/degradation</keyword>
<keyword id="KW-1015">Disulfide bond</keyword>
<keyword id="KW-0325">Glycoprotein</keyword>
<keyword id="KW-0326">Glycosidase</keyword>
<keyword id="KW-0378">Hydrolase</keyword>
<keyword id="KW-1185">Reference proteome</keyword>
<keyword id="KW-0677">Repeat</keyword>
<keyword id="KW-0964">Secreted</keyword>
<keyword id="KW-0732">Signal</keyword>
<feature type="signal peptide" evidence="2">
    <location>
        <begin position="1"/>
        <end position="31"/>
    </location>
</feature>
<feature type="chain" id="PRO_0000024799" description="Exopolygalacturonase clone GBGE184">
    <location>
        <begin position="32"/>
        <end position="422"/>
    </location>
</feature>
<feature type="repeat" description="PbH1 1" evidence="2">
    <location>
        <begin position="200"/>
        <end position="226"/>
    </location>
</feature>
<feature type="repeat" description="PbH1 2" evidence="2">
    <location>
        <begin position="227"/>
        <end position="248"/>
    </location>
</feature>
<feature type="repeat" description="PbH1 3" evidence="2">
    <location>
        <begin position="250"/>
        <end position="270"/>
    </location>
</feature>
<feature type="repeat" description="PbH1 4" evidence="2">
    <location>
        <begin position="280"/>
        <end position="301"/>
    </location>
</feature>
<feature type="repeat" description="PbH1 5" evidence="2">
    <location>
        <begin position="310"/>
        <end position="331"/>
    </location>
</feature>
<feature type="active site" description="Proton donor" evidence="1">
    <location>
        <position position="241"/>
    </location>
</feature>
<feature type="active site" evidence="4">
    <location>
        <position position="264"/>
    </location>
</feature>
<feature type="glycosylation site" description="N-linked (GlcNAc...) asparagine" evidence="3">
    <location>
        <position position="229"/>
    </location>
</feature>
<feature type="glycosylation site" description="N-linked (GlcNAc...) asparagine" evidence="3">
    <location>
        <position position="252"/>
    </location>
</feature>
<feature type="glycosylation site" description="N-linked (GlcNAc...) asparagine" evidence="3">
    <location>
        <position position="287"/>
    </location>
</feature>
<feature type="disulfide bond" evidence="1">
    <location>
        <begin position="243"/>
        <end position="260"/>
    </location>
</feature>
<feature type="disulfide bond" evidence="1">
    <location>
        <begin position="366"/>
        <end position="372"/>
    </location>
</feature>
<feature type="disulfide bond" evidence="1">
    <location>
        <begin position="404"/>
        <end position="420"/>
    </location>
</feature>
<organism>
    <name type="scientific">Arabidopsis thaliana</name>
    <name type="common">Mouse-ear cress</name>
    <dbReference type="NCBI Taxonomy" id="3702"/>
    <lineage>
        <taxon>Eukaryota</taxon>
        <taxon>Viridiplantae</taxon>
        <taxon>Streptophyta</taxon>
        <taxon>Embryophyta</taxon>
        <taxon>Tracheophyta</taxon>
        <taxon>Spermatophyta</taxon>
        <taxon>Magnoliopsida</taxon>
        <taxon>eudicotyledons</taxon>
        <taxon>Gunneridae</taxon>
        <taxon>Pentapetalae</taxon>
        <taxon>rosids</taxon>
        <taxon>malvids</taxon>
        <taxon>Brassicales</taxon>
        <taxon>Brassicaceae</taxon>
        <taxon>Camelineae</taxon>
        <taxon>Arabidopsis</taxon>
    </lineage>
</organism>
<dbReference type="EC" id="3.2.1.67"/>
<dbReference type="EMBL" id="X72291">
    <property type="protein sequence ID" value="CAA51032.1"/>
    <property type="molecule type" value="mRNA"/>
</dbReference>
<dbReference type="EMBL" id="Y16230">
    <property type="protein sequence ID" value="CAA76127.1"/>
    <property type="molecule type" value="Genomic_DNA"/>
</dbReference>
<dbReference type="EMBL" id="AC009525">
    <property type="protein sequence ID" value="AAF02888.1"/>
    <property type="molecule type" value="Genomic_DNA"/>
</dbReference>
<dbReference type="EMBL" id="CP002684">
    <property type="protein sequence ID" value="AEE27470.1"/>
    <property type="molecule type" value="Genomic_DNA"/>
</dbReference>
<dbReference type="EMBL" id="AF428425">
    <property type="protein sequence ID" value="AAL16194.1"/>
    <property type="molecule type" value="mRNA"/>
</dbReference>
<dbReference type="EMBL" id="AY065210">
    <property type="protein sequence ID" value="AAL38686.1"/>
    <property type="molecule type" value="mRNA"/>
</dbReference>
<dbReference type="EMBL" id="AY133812">
    <property type="protein sequence ID" value="AAM91746.1"/>
    <property type="molecule type" value="mRNA"/>
</dbReference>
<dbReference type="PIR" id="S34199">
    <property type="entry name" value="S34199"/>
</dbReference>
<dbReference type="SMR" id="P49062"/>
<dbReference type="FunCoup" id="P49062">
    <property type="interactions" value="137"/>
</dbReference>
<dbReference type="STRING" id="3702.P49062"/>
<dbReference type="CAZy" id="GH28">
    <property type="family name" value="Glycoside Hydrolase Family 28"/>
</dbReference>
<dbReference type="GlyCosmos" id="P49062">
    <property type="glycosylation" value="3 sites, No reported glycans"/>
</dbReference>
<dbReference type="GlyGen" id="P49062">
    <property type="glycosylation" value="3 sites"/>
</dbReference>
<dbReference type="PaxDb" id="3702-AT1G02790.1"/>
<dbReference type="ProteomicsDB" id="236142"/>
<dbReference type="EnsemblPlants" id="AT1G02790.1">
    <property type="protein sequence ID" value="AT1G02790.1"/>
    <property type="gene ID" value="AT1G02790"/>
</dbReference>
<dbReference type="Gramene" id="AT1G02790.1">
    <property type="protein sequence ID" value="AT1G02790.1"/>
    <property type="gene ID" value="AT1G02790"/>
</dbReference>
<dbReference type="KEGG" id="ath:AT1G02790"/>
<dbReference type="Araport" id="AT1G02790"/>
<dbReference type="TAIR" id="AT1G02790">
    <property type="gene designation" value="PGA4"/>
</dbReference>
<dbReference type="eggNOG" id="ENOG502QV2R">
    <property type="taxonomic scope" value="Eukaryota"/>
</dbReference>
<dbReference type="HOGENOM" id="CLU_016031_2_2_1"/>
<dbReference type="InParanoid" id="P49062"/>
<dbReference type="OMA" id="FLNTWIQ"/>
<dbReference type="OrthoDB" id="187139at2759"/>
<dbReference type="PhylomeDB" id="P49062"/>
<dbReference type="BioCyc" id="ARA:AT1G02790-MONOMER"/>
<dbReference type="PRO" id="PR:P49062"/>
<dbReference type="Proteomes" id="UP000006548">
    <property type="component" value="Chromosome 1"/>
</dbReference>
<dbReference type="ExpressionAtlas" id="P49062">
    <property type="expression patterns" value="baseline and differential"/>
</dbReference>
<dbReference type="GO" id="GO:0005576">
    <property type="term" value="C:extracellular region"/>
    <property type="evidence" value="ECO:0007669"/>
    <property type="project" value="UniProtKB-SubCell"/>
</dbReference>
<dbReference type="GO" id="GO:0047911">
    <property type="term" value="F:galacturan 1,4-alpha-galacturonidase activity"/>
    <property type="evidence" value="ECO:0007669"/>
    <property type="project" value="UniProtKB-EC"/>
</dbReference>
<dbReference type="GO" id="GO:0004650">
    <property type="term" value="F:polygalacturonase activity"/>
    <property type="evidence" value="ECO:0000250"/>
    <property type="project" value="TAIR"/>
</dbReference>
<dbReference type="GO" id="GO:0005975">
    <property type="term" value="P:carbohydrate metabolic process"/>
    <property type="evidence" value="ECO:0007669"/>
    <property type="project" value="InterPro"/>
</dbReference>
<dbReference type="GO" id="GO:0071555">
    <property type="term" value="P:cell wall organization"/>
    <property type="evidence" value="ECO:0007669"/>
    <property type="project" value="UniProtKB-KW"/>
</dbReference>
<dbReference type="FunFam" id="2.160.20.10:FF:000096">
    <property type="entry name" value="Exopolygalacturonase clone GBGE184"/>
    <property type="match status" value="1"/>
</dbReference>
<dbReference type="Gene3D" id="2.160.20.10">
    <property type="entry name" value="Single-stranded right-handed beta-helix, Pectin lyase-like"/>
    <property type="match status" value="1"/>
</dbReference>
<dbReference type="InterPro" id="IPR000743">
    <property type="entry name" value="Glyco_hydro_28"/>
</dbReference>
<dbReference type="InterPro" id="IPR006626">
    <property type="entry name" value="PbH1"/>
</dbReference>
<dbReference type="InterPro" id="IPR012334">
    <property type="entry name" value="Pectin_lyas_fold"/>
</dbReference>
<dbReference type="InterPro" id="IPR011050">
    <property type="entry name" value="Pectin_lyase_fold/virulence"/>
</dbReference>
<dbReference type="PANTHER" id="PTHR31375">
    <property type="match status" value="1"/>
</dbReference>
<dbReference type="Pfam" id="PF00295">
    <property type="entry name" value="Glyco_hydro_28"/>
    <property type="match status" value="1"/>
</dbReference>
<dbReference type="SMART" id="SM00710">
    <property type="entry name" value="PbH1"/>
    <property type="match status" value="5"/>
</dbReference>
<dbReference type="SUPFAM" id="SSF51126">
    <property type="entry name" value="Pectin lyase-like"/>
    <property type="match status" value="1"/>
</dbReference>
<dbReference type="PROSITE" id="PS00502">
    <property type="entry name" value="POLYGALACTURONASE"/>
    <property type="match status" value="1"/>
</dbReference>
<protein>
    <recommendedName>
        <fullName>Exopolygalacturonase clone GBGE184</fullName>
        <shortName>ExoPG</shortName>
        <ecNumber>3.2.1.67</ecNumber>
    </recommendedName>
    <alternativeName>
        <fullName>Galacturan 1,4-alpha-galacturonidase</fullName>
    </alternativeName>
    <alternativeName>
        <fullName>Pectinase</fullName>
    </alternativeName>
</protein>
<sequence>MANARSLVAKANNINVGSLILMALVFGSCVANGEYLGGRRGLAANSGNPTVYDITKFGAVGDGSTNTFKAFLNTWIQVCDSPVPATLLVPKGTFLAGPVIFAGPCKSKVTVNVIGTIIATTSGYATPEWFLFERVDNLVLTGTGTFHGKGEAVWKADGCGKKVQCNLPPTSLKFRNMKNVEINGISSVNAKAFHMFLVKTENVNIQNIKLTAPAESPNTDGIHLSNADNVSILDSTIATGDDCVSVGRGSNNVTVERVICGPGHGLSVGSLGKYKNEEDVSGIHVNNCTMIETDNGLRIKTWGGSDPSKAVDIKFENIIMQSVKNPIIIDQNYGSRGGDSQVAISDILFKNIRGTTITKDVVQIMCSKSVPCQGVNVVDVNLDYVGKTGGEKKSSSGGLVGALCDNANVIFGGKLSFPMCPK</sequence>